<sequence>MARKKNTKRKVKKNVPLGIAHIHTTFNNTIVTITDLNGNAVTWSSAGALGFKGSRKSTPFAAQLAAEAVAKAAMEHGMVKVETFITGPGPGREAAIRSLQAAGLEITAIKDVTAVPHNGCRPPKPPRG</sequence>
<dbReference type="EMBL" id="CP000061">
    <property type="protein sequence ID" value="ABC65613.1"/>
    <property type="molecule type" value="Genomic_DNA"/>
</dbReference>
<dbReference type="RefSeq" id="WP_011412776.1">
    <property type="nucleotide sequence ID" value="NC_007716.1"/>
</dbReference>
<dbReference type="SMR" id="Q2NIY0"/>
<dbReference type="STRING" id="322098.AYWB_496"/>
<dbReference type="KEGG" id="ayw:AYWB_496"/>
<dbReference type="eggNOG" id="COG0100">
    <property type="taxonomic scope" value="Bacteria"/>
</dbReference>
<dbReference type="HOGENOM" id="CLU_072439_5_0_14"/>
<dbReference type="OrthoDB" id="9806415at2"/>
<dbReference type="PhylomeDB" id="Q2NIY0"/>
<dbReference type="Proteomes" id="UP000001934">
    <property type="component" value="Chromosome"/>
</dbReference>
<dbReference type="GO" id="GO:1990904">
    <property type="term" value="C:ribonucleoprotein complex"/>
    <property type="evidence" value="ECO:0007669"/>
    <property type="project" value="UniProtKB-KW"/>
</dbReference>
<dbReference type="GO" id="GO:0005840">
    <property type="term" value="C:ribosome"/>
    <property type="evidence" value="ECO:0007669"/>
    <property type="project" value="UniProtKB-KW"/>
</dbReference>
<dbReference type="GO" id="GO:0019843">
    <property type="term" value="F:rRNA binding"/>
    <property type="evidence" value="ECO:0007669"/>
    <property type="project" value="UniProtKB-UniRule"/>
</dbReference>
<dbReference type="GO" id="GO:0003735">
    <property type="term" value="F:structural constituent of ribosome"/>
    <property type="evidence" value="ECO:0007669"/>
    <property type="project" value="InterPro"/>
</dbReference>
<dbReference type="GO" id="GO:0006412">
    <property type="term" value="P:translation"/>
    <property type="evidence" value="ECO:0007669"/>
    <property type="project" value="UniProtKB-UniRule"/>
</dbReference>
<dbReference type="FunFam" id="3.30.420.80:FF:000001">
    <property type="entry name" value="30S ribosomal protein S11"/>
    <property type="match status" value="1"/>
</dbReference>
<dbReference type="Gene3D" id="3.30.420.80">
    <property type="entry name" value="Ribosomal protein S11"/>
    <property type="match status" value="1"/>
</dbReference>
<dbReference type="HAMAP" id="MF_01310">
    <property type="entry name" value="Ribosomal_uS11"/>
    <property type="match status" value="1"/>
</dbReference>
<dbReference type="InterPro" id="IPR001971">
    <property type="entry name" value="Ribosomal_uS11"/>
</dbReference>
<dbReference type="InterPro" id="IPR019981">
    <property type="entry name" value="Ribosomal_uS11_bac-type"/>
</dbReference>
<dbReference type="InterPro" id="IPR036967">
    <property type="entry name" value="Ribosomal_uS11_sf"/>
</dbReference>
<dbReference type="NCBIfam" id="NF003698">
    <property type="entry name" value="PRK05309.1"/>
    <property type="match status" value="1"/>
</dbReference>
<dbReference type="NCBIfam" id="TIGR03632">
    <property type="entry name" value="uS11_bact"/>
    <property type="match status" value="1"/>
</dbReference>
<dbReference type="PANTHER" id="PTHR11759">
    <property type="entry name" value="40S RIBOSOMAL PROTEIN S14/30S RIBOSOMAL PROTEIN S11"/>
    <property type="match status" value="1"/>
</dbReference>
<dbReference type="Pfam" id="PF00411">
    <property type="entry name" value="Ribosomal_S11"/>
    <property type="match status" value="1"/>
</dbReference>
<dbReference type="PIRSF" id="PIRSF002131">
    <property type="entry name" value="Ribosomal_S11"/>
    <property type="match status" value="1"/>
</dbReference>
<dbReference type="SUPFAM" id="SSF53137">
    <property type="entry name" value="Translational machinery components"/>
    <property type="match status" value="1"/>
</dbReference>
<accession>Q2NIY0</accession>
<reference key="1">
    <citation type="journal article" date="2006" name="J. Bacteriol.">
        <title>Living with genome instability: the adaptation of phytoplasmas to diverse environments of their insect and plant hosts.</title>
        <authorList>
            <person name="Bai X."/>
            <person name="Zhang J."/>
            <person name="Ewing A."/>
            <person name="Miller S.A."/>
            <person name="Jancso Radek A."/>
            <person name="Shevchenko D.V."/>
            <person name="Tsukerman K."/>
            <person name="Walunas T."/>
            <person name="Lapidus A."/>
            <person name="Campbell J.W."/>
            <person name="Hogenhout S.A."/>
        </authorList>
    </citation>
    <scope>NUCLEOTIDE SEQUENCE [LARGE SCALE GENOMIC DNA]</scope>
    <source>
        <strain>AYWB</strain>
    </source>
</reference>
<gene>
    <name evidence="1" type="primary">rpsK</name>
    <name type="ordered locus">AYWB_496</name>
</gene>
<comment type="function">
    <text evidence="1">Located on the platform of the 30S subunit, it bridges several disparate RNA helices of the 16S rRNA. Forms part of the Shine-Dalgarno cleft in the 70S ribosome.</text>
</comment>
<comment type="subunit">
    <text evidence="1">Part of the 30S ribosomal subunit. Interacts with proteins S7 and S18. Binds to IF-3.</text>
</comment>
<comment type="similarity">
    <text evidence="1">Belongs to the universal ribosomal protein uS11 family.</text>
</comment>
<name>RS11_AYWBP</name>
<evidence type="ECO:0000255" key="1">
    <source>
        <dbReference type="HAMAP-Rule" id="MF_01310"/>
    </source>
</evidence>
<evidence type="ECO:0000305" key="2"/>
<keyword id="KW-0687">Ribonucleoprotein</keyword>
<keyword id="KW-0689">Ribosomal protein</keyword>
<keyword id="KW-0694">RNA-binding</keyword>
<keyword id="KW-0699">rRNA-binding</keyword>
<feature type="chain" id="PRO_0000294716" description="Small ribosomal subunit protein uS11">
    <location>
        <begin position="1"/>
        <end position="128"/>
    </location>
</feature>
<proteinExistence type="inferred from homology"/>
<organism>
    <name type="scientific">Aster yellows witches'-broom phytoplasma (strain AYWB)</name>
    <dbReference type="NCBI Taxonomy" id="322098"/>
    <lineage>
        <taxon>Bacteria</taxon>
        <taxon>Bacillati</taxon>
        <taxon>Mycoplasmatota</taxon>
        <taxon>Mollicutes</taxon>
        <taxon>Acholeplasmatales</taxon>
        <taxon>Acholeplasmataceae</taxon>
        <taxon>Candidatus Phytoplasma</taxon>
        <taxon>16SrI (Aster yellows group)</taxon>
    </lineage>
</organism>
<protein>
    <recommendedName>
        <fullName evidence="1">Small ribosomal subunit protein uS11</fullName>
    </recommendedName>
    <alternativeName>
        <fullName evidence="2">30S ribosomal protein S11</fullName>
    </alternativeName>
</protein>